<accession>Q54P47</accession>
<proteinExistence type="inferred from homology"/>
<keyword id="KW-0067">ATP-binding</keyword>
<keyword id="KW-0175">Coiled coil</keyword>
<keyword id="KW-0418">Kinase</keyword>
<keyword id="KW-0547">Nucleotide-binding</keyword>
<keyword id="KW-0597">Phosphoprotein</keyword>
<keyword id="KW-1185">Reference proteome</keyword>
<keyword id="KW-0723">Serine/threonine-protein kinase</keyword>
<keyword id="KW-0808">Transferase</keyword>
<gene>
    <name type="primary">ndrC</name>
    <name type="ORF">DDB_G0284839</name>
</gene>
<sequence length="1335" mass="149360">MSRKENLNRSSSSNSIEFNRDRDRDSSNISNSSNINCNNSSQTPPIPQHNSLSGRSKHSSPIHSLKKKGSLVRQGIEDLFSSLSVDTHSSSNSNNNSSSNNNNNNNNHNINSSSESSTPTTPRSSFTPQVTMNSNQSSGNNSPQLSSRSSSQSTLIPSNEPTKSLAKFFLLAQQVDYVGDSSSTLLPVENLGLLSIQWKTYFTIGLNSTTTGYDVLKYISIKTNRDLKSLTLADSDGKIIDNDYILTQQRCKKFVVVEDLNIDDLKMKQLNHLQQLPPPSQQQLPPPQSHQQQLLQQQLQQRLQNQNQNQNNNSNSNSNSSSSSSCSTPQSIVSQQQKLHQMLLNQQQIQSSQSTTPTNSSQKSSPNKVTDHQHVENCNFTSPSPSSPSSPSSPSSGMILDGFNLDGNGGRPTPLIITPSSPSSMRKNPPAIPPRSPSSFSGGSPLNNILLNNTELISEPVTTTTTTTTTTSSSSSLSVTTTISNPNYTQNLPTTPLSNSSSNNNNNGSFITLQDTTNNKSIINNNRESPPESPMGSRKSSGSSNTTSSTTNTTTPSSSSLTTSSGKESRDRDSKDKEKDLIGSGNNNNNNNNNNNNNNNNNKVEKEKENYCKFLDAVNSFNMVGNNGVLFNGEANRNMKLTNAQEEKCKILDNYFNHYYQELFKYLHQRHRRIKTIEDFTVESRMDRQGAEQWMKKQFEKETNFLRNKRAGMKLKEFKILTQIGKGGFGQVFLAQKKDTGDIVTLKRLKKQTVEWANQRNQVSQEKSVMLVDNKWITKLLYSFQDANYLYLAMEYHCGGDFRALLNNLGTLSEDEARFYMIEMIEAISSLHEMGIVHRDCKPSNFVLDKLGHIKLIDFGLSKEGIEKRNGWNKATMNELRKSCLSASFTSNTMKAASAYLSGGTNVMAYRRPIAHSAVGSPEYMSPEIVNDQGYDMTCDYWSLGCVFVEMLCGFNPFCADTPNDVFINILRWKETLDWPLFTQELSVEAADLLKNMLMEQPHRLGGKGKQDFKNHPFFKNHNWDEIVNGQVKPPFVPKVESDIDTSYFEDAVNNDSSTWDIDDNDCGGYGSGGYGGGGPQARDPFNNLKIPFFTYRKSSALSLSMSSEIAQSLNYNNGNTYSNYTSNNNNNNLHNNQIHEKNGNSGYNHFHFDSIEQQNQYQLSLLSPNSSDKSIGMIQYIKKFRYQQLQQQLQQHFQQQNHLQQLKSNHRKSPTRQLISSLLYKGDDKTSILQNYSSQSQPSLANQLQSSSSSPSPSLQSQSQSPSLQSSSKSTPNLSSSLLENPVKEELEYKNQTENEVEIKKENESEEIQSLRDQLKEIIIYEDYDQEYSI</sequence>
<comment type="catalytic activity">
    <reaction>
        <text>L-seryl-[protein] + ATP = O-phospho-L-seryl-[protein] + ADP + H(+)</text>
        <dbReference type="Rhea" id="RHEA:17989"/>
        <dbReference type="Rhea" id="RHEA-COMP:9863"/>
        <dbReference type="Rhea" id="RHEA-COMP:11604"/>
        <dbReference type="ChEBI" id="CHEBI:15378"/>
        <dbReference type="ChEBI" id="CHEBI:29999"/>
        <dbReference type="ChEBI" id="CHEBI:30616"/>
        <dbReference type="ChEBI" id="CHEBI:83421"/>
        <dbReference type="ChEBI" id="CHEBI:456216"/>
        <dbReference type="EC" id="2.7.11.1"/>
    </reaction>
</comment>
<comment type="catalytic activity">
    <reaction>
        <text>L-threonyl-[protein] + ATP = O-phospho-L-threonyl-[protein] + ADP + H(+)</text>
        <dbReference type="Rhea" id="RHEA:46608"/>
        <dbReference type="Rhea" id="RHEA-COMP:11060"/>
        <dbReference type="Rhea" id="RHEA-COMP:11605"/>
        <dbReference type="ChEBI" id="CHEBI:15378"/>
        <dbReference type="ChEBI" id="CHEBI:30013"/>
        <dbReference type="ChEBI" id="CHEBI:30616"/>
        <dbReference type="ChEBI" id="CHEBI:61977"/>
        <dbReference type="ChEBI" id="CHEBI:456216"/>
        <dbReference type="EC" id="2.7.11.1"/>
    </reaction>
</comment>
<comment type="similarity">
    <text evidence="5">Belongs to the protein kinase superfamily. AGC Ser/Thr protein kinase family.</text>
</comment>
<protein>
    <recommendedName>
        <fullName>Probable serine/threonine-protein kinase ndrC</fullName>
        <ecNumber>2.7.11.1</ecNumber>
    </recommendedName>
    <alternativeName>
        <fullName>Nuclear DBF2-related kinase C</fullName>
    </alternativeName>
</protein>
<organism>
    <name type="scientific">Dictyostelium discoideum</name>
    <name type="common">Social amoeba</name>
    <dbReference type="NCBI Taxonomy" id="44689"/>
    <lineage>
        <taxon>Eukaryota</taxon>
        <taxon>Amoebozoa</taxon>
        <taxon>Evosea</taxon>
        <taxon>Eumycetozoa</taxon>
        <taxon>Dictyostelia</taxon>
        <taxon>Dictyosteliales</taxon>
        <taxon>Dictyosteliaceae</taxon>
        <taxon>Dictyostelium</taxon>
    </lineage>
</organism>
<evidence type="ECO:0000255" key="1"/>
<evidence type="ECO:0000255" key="2">
    <source>
        <dbReference type="PROSITE-ProRule" id="PRU00159"/>
    </source>
</evidence>
<evidence type="ECO:0000255" key="3">
    <source>
        <dbReference type="PROSITE-ProRule" id="PRU00618"/>
    </source>
</evidence>
<evidence type="ECO:0000256" key="4">
    <source>
        <dbReference type="SAM" id="MobiDB-lite"/>
    </source>
</evidence>
<evidence type="ECO:0000305" key="5"/>
<name>NDRC_DICDI</name>
<dbReference type="EC" id="2.7.11.1"/>
<dbReference type="EMBL" id="AAFI02000071">
    <property type="protein sequence ID" value="EAL65072.1"/>
    <property type="molecule type" value="Genomic_DNA"/>
</dbReference>
<dbReference type="RefSeq" id="XP_638411.1">
    <property type="nucleotide sequence ID" value="XM_633319.1"/>
</dbReference>
<dbReference type="SMR" id="Q54P47"/>
<dbReference type="FunCoup" id="Q54P47">
    <property type="interactions" value="195"/>
</dbReference>
<dbReference type="STRING" id="44689.Q54P47"/>
<dbReference type="PaxDb" id="44689-DDB0219984"/>
<dbReference type="EnsemblProtists" id="EAL65072">
    <property type="protein sequence ID" value="EAL65072"/>
    <property type="gene ID" value="DDB_G0284839"/>
</dbReference>
<dbReference type="GeneID" id="8624781"/>
<dbReference type="KEGG" id="ddi:DDB_G0284839"/>
<dbReference type="dictyBase" id="DDB_G0284839">
    <property type="gene designation" value="ndrC"/>
</dbReference>
<dbReference type="VEuPathDB" id="AmoebaDB:DDB_G0284839"/>
<dbReference type="eggNOG" id="KOG0605">
    <property type="taxonomic scope" value="Eukaryota"/>
</dbReference>
<dbReference type="HOGENOM" id="CLU_258804_0_0_1"/>
<dbReference type="InParanoid" id="Q54P47"/>
<dbReference type="OMA" id="EWANQRT"/>
<dbReference type="PRO" id="PR:Q54P47"/>
<dbReference type="Proteomes" id="UP000002195">
    <property type="component" value="Chromosome 4"/>
</dbReference>
<dbReference type="GO" id="GO:0005813">
    <property type="term" value="C:centrosome"/>
    <property type="evidence" value="ECO:0000314"/>
    <property type="project" value="dictyBase"/>
</dbReference>
<dbReference type="GO" id="GO:0005634">
    <property type="term" value="C:nucleus"/>
    <property type="evidence" value="ECO:0000250"/>
    <property type="project" value="dictyBase"/>
</dbReference>
<dbReference type="GO" id="GO:0005524">
    <property type="term" value="F:ATP binding"/>
    <property type="evidence" value="ECO:0007669"/>
    <property type="project" value="UniProtKB-KW"/>
</dbReference>
<dbReference type="GO" id="GO:0005095">
    <property type="term" value="F:GTPase inhibitor activity"/>
    <property type="evidence" value="ECO:0000314"/>
    <property type="project" value="dictyBase"/>
</dbReference>
<dbReference type="GO" id="GO:0106310">
    <property type="term" value="F:protein serine kinase activity"/>
    <property type="evidence" value="ECO:0007669"/>
    <property type="project" value="RHEA"/>
</dbReference>
<dbReference type="GO" id="GO:0004674">
    <property type="term" value="F:protein serine/threonine kinase activity"/>
    <property type="evidence" value="ECO:0000318"/>
    <property type="project" value="GO_Central"/>
</dbReference>
<dbReference type="GO" id="GO:0007098">
    <property type="term" value="P:centrosome cycle"/>
    <property type="evidence" value="ECO:0000315"/>
    <property type="project" value="dictyBase"/>
</dbReference>
<dbReference type="GO" id="GO:0035556">
    <property type="term" value="P:intracellular signal transduction"/>
    <property type="evidence" value="ECO:0000318"/>
    <property type="project" value="GO_Central"/>
</dbReference>
<dbReference type="GO" id="GO:0000281">
    <property type="term" value="P:mitotic cytokinesis"/>
    <property type="evidence" value="ECO:0000315"/>
    <property type="project" value="dictyBase"/>
</dbReference>
<dbReference type="CDD" id="cd05600">
    <property type="entry name" value="STKc_Sid2p_like"/>
    <property type="match status" value="1"/>
</dbReference>
<dbReference type="FunFam" id="3.30.200.20:FF:000109">
    <property type="entry name" value="Non-specific serine/threonine protein kinase"/>
    <property type="match status" value="1"/>
</dbReference>
<dbReference type="FunFam" id="1.10.510.10:FF:000024">
    <property type="entry name" value="Probable serine/threonine-protein kinase cot-1"/>
    <property type="match status" value="1"/>
</dbReference>
<dbReference type="Gene3D" id="3.30.200.20">
    <property type="entry name" value="Phosphorylase Kinase, domain 1"/>
    <property type="match status" value="2"/>
</dbReference>
<dbReference type="Gene3D" id="1.10.510.10">
    <property type="entry name" value="Transferase(Phosphotransferase) domain 1"/>
    <property type="match status" value="2"/>
</dbReference>
<dbReference type="InterPro" id="IPR000961">
    <property type="entry name" value="AGC-kinase_C"/>
</dbReference>
<dbReference type="InterPro" id="IPR011009">
    <property type="entry name" value="Kinase-like_dom_sf"/>
</dbReference>
<dbReference type="InterPro" id="IPR000719">
    <property type="entry name" value="Prot_kinase_dom"/>
</dbReference>
<dbReference type="InterPro" id="IPR050236">
    <property type="entry name" value="Ser_Thr_kinase_AGC"/>
</dbReference>
<dbReference type="PANTHER" id="PTHR24356:SF417">
    <property type="entry name" value="CELL CYCLE PROTEIN KINASE DBF2-RELATED"/>
    <property type="match status" value="1"/>
</dbReference>
<dbReference type="PANTHER" id="PTHR24356">
    <property type="entry name" value="SERINE/THREONINE-PROTEIN KINASE"/>
    <property type="match status" value="1"/>
</dbReference>
<dbReference type="Pfam" id="PF00069">
    <property type="entry name" value="Pkinase"/>
    <property type="match status" value="1"/>
</dbReference>
<dbReference type="SMART" id="SM00133">
    <property type="entry name" value="S_TK_X"/>
    <property type="match status" value="1"/>
</dbReference>
<dbReference type="SUPFAM" id="SSF56112">
    <property type="entry name" value="Protein kinase-like (PK-like)"/>
    <property type="match status" value="1"/>
</dbReference>
<dbReference type="PROSITE" id="PS51285">
    <property type="entry name" value="AGC_KINASE_CTER"/>
    <property type="match status" value="1"/>
</dbReference>
<dbReference type="PROSITE" id="PS50011">
    <property type="entry name" value="PROTEIN_KINASE_DOM"/>
    <property type="match status" value="1"/>
</dbReference>
<reference key="1">
    <citation type="journal article" date="2005" name="Nature">
        <title>The genome of the social amoeba Dictyostelium discoideum.</title>
        <authorList>
            <person name="Eichinger L."/>
            <person name="Pachebat J.A."/>
            <person name="Gloeckner G."/>
            <person name="Rajandream M.A."/>
            <person name="Sucgang R."/>
            <person name="Berriman M."/>
            <person name="Song J."/>
            <person name="Olsen R."/>
            <person name="Szafranski K."/>
            <person name="Xu Q."/>
            <person name="Tunggal B."/>
            <person name="Kummerfeld S."/>
            <person name="Madera M."/>
            <person name="Konfortov B.A."/>
            <person name="Rivero F."/>
            <person name="Bankier A.T."/>
            <person name="Lehmann R."/>
            <person name="Hamlin N."/>
            <person name="Davies R."/>
            <person name="Gaudet P."/>
            <person name="Fey P."/>
            <person name="Pilcher K."/>
            <person name="Chen G."/>
            <person name="Saunders D."/>
            <person name="Sodergren E.J."/>
            <person name="Davis P."/>
            <person name="Kerhornou A."/>
            <person name="Nie X."/>
            <person name="Hall N."/>
            <person name="Anjard C."/>
            <person name="Hemphill L."/>
            <person name="Bason N."/>
            <person name="Farbrother P."/>
            <person name="Desany B."/>
            <person name="Just E."/>
            <person name="Morio T."/>
            <person name="Rost R."/>
            <person name="Churcher C.M."/>
            <person name="Cooper J."/>
            <person name="Haydock S."/>
            <person name="van Driessche N."/>
            <person name="Cronin A."/>
            <person name="Goodhead I."/>
            <person name="Muzny D.M."/>
            <person name="Mourier T."/>
            <person name="Pain A."/>
            <person name="Lu M."/>
            <person name="Harper D."/>
            <person name="Lindsay R."/>
            <person name="Hauser H."/>
            <person name="James K.D."/>
            <person name="Quiles M."/>
            <person name="Madan Babu M."/>
            <person name="Saito T."/>
            <person name="Buchrieser C."/>
            <person name="Wardroper A."/>
            <person name="Felder M."/>
            <person name="Thangavelu M."/>
            <person name="Johnson D."/>
            <person name="Knights A."/>
            <person name="Loulseged H."/>
            <person name="Mungall K.L."/>
            <person name="Oliver K."/>
            <person name="Price C."/>
            <person name="Quail M.A."/>
            <person name="Urushihara H."/>
            <person name="Hernandez J."/>
            <person name="Rabbinowitsch E."/>
            <person name="Steffen D."/>
            <person name="Sanders M."/>
            <person name="Ma J."/>
            <person name="Kohara Y."/>
            <person name="Sharp S."/>
            <person name="Simmonds M.N."/>
            <person name="Spiegler S."/>
            <person name="Tivey A."/>
            <person name="Sugano S."/>
            <person name="White B."/>
            <person name="Walker D."/>
            <person name="Woodward J.R."/>
            <person name="Winckler T."/>
            <person name="Tanaka Y."/>
            <person name="Shaulsky G."/>
            <person name="Schleicher M."/>
            <person name="Weinstock G.M."/>
            <person name="Rosenthal A."/>
            <person name="Cox E.C."/>
            <person name="Chisholm R.L."/>
            <person name="Gibbs R.A."/>
            <person name="Loomis W.F."/>
            <person name="Platzer M."/>
            <person name="Kay R.R."/>
            <person name="Williams J.G."/>
            <person name="Dear P.H."/>
            <person name="Noegel A.A."/>
            <person name="Barrell B.G."/>
            <person name="Kuspa A."/>
        </authorList>
    </citation>
    <scope>NUCLEOTIDE SEQUENCE [LARGE SCALE GENOMIC DNA]</scope>
    <source>
        <strain>AX4</strain>
    </source>
</reference>
<feature type="chain" id="PRO_0000362024" description="Probable serine/threonine-protein kinase ndrC">
    <location>
        <begin position="1"/>
        <end position="1335"/>
    </location>
</feature>
<feature type="domain" description="Protein kinase" evidence="2">
    <location>
        <begin position="718"/>
        <end position="1019"/>
    </location>
</feature>
<feature type="domain" description="AGC-kinase C-terminal" evidence="3">
    <location>
        <begin position="1020"/>
        <end position="1106"/>
    </location>
</feature>
<feature type="region of interest" description="Disordered" evidence="4">
    <location>
        <begin position="1"/>
        <end position="70"/>
    </location>
</feature>
<feature type="region of interest" description="Disordered" evidence="4">
    <location>
        <begin position="85"/>
        <end position="158"/>
    </location>
</feature>
<feature type="region of interest" description="Disordered" evidence="4">
    <location>
        <begin position="276"/>
        <end position="447"/>
    </location>
</feature>
<feature type="region of interest" description="Disordered" evidence="4">
    <location>
        <begin position="462"/>
        <end position="603"/>
    </location>
</feature>
<feature type="region of interest" description="Disordered" evidence="4">
    <location>
        <begin position="1239"/>
        <end position="1313"/>
    </location>
</feature>
<feature type="coiled-coil region" evidence="1">
    <location>
        <begin position="586"/>
        <end position="613"/>
    </location>
</feature>
<feature type="coiled-coil region" evidence="1">
    <location>
        <begin position="1289"/>
        <end position="1325"/>
    </location>
</feature>
<feature type="compositionally biased region" description="Polar residues" evidence="4">
    <location>
        <begin position="8"/>
        <end position="17"/>
    </location>
</feature>
<feature type="compositionally biased region" description="Low complexity" evidence="4">
    <location>
        <begin position="27"/>
        <end position="41"/>
    </location>
</feature>
<feature type="compositionally biased region" description="Basic residues" evidence="4">
    <location>
        <begin position="55"/>
        <end position="70"/>
    </location>
</feature>
<feature type="compositionally biased region" description="Low complexity" evidence="4">
    <location>
        <begin position="89"/>
        <end position="117"/>
    </location>
</feature>
<feature type="compositionally biased region" description="Polar residues" evidence="4">
    <location>
        <begin position="118"/>
        <end position="132"/>
    </location>
</feature>
<feature type="compositionally biased region" description="Low complexity" evidence="4">
    <location>
        <begin position="133"/>
        <end position="153"/>
    </location>
</feature>
<feature type="compositionally biased region" description="Pro residues" evidence="4">
    <location>
        <begin position="276"/>
        <end position="288"/>
    </location>
</feature>
<feature type="compositionally biased region" description="Low complexity" evidence="4">
    <location>
        <begin position="289"/>
        <end position="331"/>
    </location>
</feature>
<feature type="compositionally biased region" description="Low complexity" evidence="4">
    <location>
        <begin position="345"/>
        <end position="368"/>
    </location>
</feature>
<feature type="compositionally biased region" description="Low complexity" evidence="4">
    <location>
        <begin position="382"/>
        <end position="396"/>
    </location>
</feature>
<feature type="compositionally biased region" description="Low complexity" evidence="4">
    <location>
        <begin position="412"/>
        <end position="424"/>
    </location>
</feature>
<feature type="compositionally biased region" description="Low complexity" evidence="4">
    <location>
        <begin position="437"/>
        <end position="447"/>
    </location>
</feature>
<feature type="compositionally biased region" description="Low complexity" evidence="4">
    <location>
        <begin position="462"/>
        <end position="484"/>
    </location>
</feature>
<feature type="compositionally biased region" description="Polar residues" evidence="4">
    <location>
        <begin position="485"/>
        <end position="497"/>
    </location>
</feature>
<feature type="compositionally biased region" description="Low complexity" evidence="4">
    <location>
        <begin position="498"/>
        <end position="507"/>
    </location>
</feature>
<feature type="compositionally biased region" description="Polar residues" evidence="4">
    <location>
        <begin position="508"/>
        <end position="528"/>
    </location>
</feature>
<feature type="compositionally biased region" description="Low complexity" evidence="4">
    <location>
        <begin position="540"/>
        <end position="566"/>
    </location>
</feature>
<feature type="compositionally biased region" description="Basic and acidic residues" evidence="4">
    <location>
        <begin position="567"/>
        <end position="581"/>
    </location>
</feature>
<feature type="compositionally biased region" description="Low complexity" evidence="4">
    <location>
        <begin position="586"/>
        <end position="602"/>
    </location>
</feature>
<feature type="compositionally biased region" description="Low complexity" evidence="4">
    <location>
        <begin position="1239"/>
        <end position="1284"/>
    </location>
</feature>
<feature type="compositionally biased region" description="Basic and acidic residues" evidence="4">
    <location>
        <begin position="1287"/>
        <end position="1313"/>
    </location>
</feature>
<feature type="active site" description="Proton acceptor" evidence="2">
    <location>
        <position position="840"/>
    </location>
</feature>
<feature type="binding site" evidence="2">
    <location>
        <begin position="724"/>
        <end position="732"/>
    </location>
    <ligand>
        <name>ATP</name>
        <dbReference type="ChEBI" id="CHEBI:30616"/>
    </ligand>
</feature>
<feature type="binding site" evidence="2">
    <location>
        <position position="747"/>
    </location>
    <ligand>
        <name>ATP</name>
        <dbReference type="ChEBI" id="CHEBI:30616"/>
    </ligand>
</feature>